<accession>P68797</accession>
<accession>P26592</accession>
<evidence type="ECO:0000255" key="1">
    <source>
        <dbReference type="HAMAP-Rule" id="MF_01556"/>
    </source>
</evidence>
<organism>
    <name type="scientific">Staphylococcus aureus (strain MW2)</name>
    <dbReference type="NCBI Taxonomy" id="196620"/>
    <lineage>
        <taxon>Bacteria</taxon>
        <taxon>Bacillati</taxon>
        <taxon>Bacillota</taxon>
        <taxon>Bacilli</taxon>
        <taxon>Bacillales</taxon>
        <taxon>Staphylococcaceae</taxon>
        <taxon>Staphylococcus</taxon>
    </lineage>
</organism>
<gene>
    <name evidence="1" type="primary">lacB</name>
    <name type="ordered locus">MW2120</name>
</gene>
<name>LACB_STAAW</name>
<reference key="1">
    <citation type="journal article" date="2002" name="Lancet">
        <title>Genome and virulence determinants of high virulence community-acquired MRSA.</title>
        <authorList>
            <person name="Baba T."/>
            <person name="Takeuchi F."/>
            <person name="Kuroda M."/>
            <person name="Yuzawa H."/>
            <person name="Aoki K."/>
            <person name="Oguchi A."/>
            <person name="Nagai Y."/>
            <person name="Iwama N."/>
            <person name="Asano K."/>
            <person name="Naimi T."/>
            <person name="Kuroda H."/>
            <person name="Cui L."/>
            <person name="Yamamoto K."/>
            <person name="Hiramatsu K."/>
        </authorList>
    </citation>
    <scope>NUCLEOTIDE SEQUENCE [LARGE SCALE GENOMIC DNA]</scope>
    <source>
        <strain>MW2</strain>
    </source>
</reference>
<feature type="chain" id="PRO_0000208141" description="Galactose-6-phosphate isomerase subunit LacB">
    <location>
        <begin position="1"/>
        <end position="171"/>
    </location>
</feature>
<keyword id="KW-0413">Isomerase</keyword>
<keyword id="KW-0423">Lactose metabolism</keyword>
<protein>
    <recommendedName>
        <fullName evidence="1">Galactose-6-phosphate isomerase subunit LacB</fullName>
        <ecNumber evidence="1">5.3.1.26</ecNumber>
    </recommendedName>
</protein>
<sequence length="171" mass="18951">MKIALGCDHIVTDTKMRVSEFLKSKGHEVIDVGTYDFTRTHYPIFGKKVGEQVVSGNADLGVCICGTGVGINNAVNKVPGVRSALVRDMTSALYAKEELNANVIGFGGRIIGELLMCDIIDAFINAEYKPTEENKKLIAKIKHLETSNADQADPHFFDEFLEKWDRGEYHD</sequence>
<comment type="catalytic activity">
    <reaction evidence="1">
        <text>aldehydo-D-galactose 6-phosphate = keto-D-tagatose 6-phosphate</text>
        <dbReference type="Rhea" id="RHEA:13033"/>
        <dbReference type="ChEBI" id="CHEBI:58255"/>
        <dbReference type="ChEBI" id="CHEBI:134283"/>
        <dbReference type="EC" id="5.3.1.26"/>
    </reaction>
</comment>
<comment type="pathway">
    <text evidence="1">Carbohydrate metabolism; D-galactose 6-phosphate degradation; D-tagatose 6-phosphate from D-galactose 6-phosphate: step 1/1.</text>
</comment>
<comment type="subunit">
    <text evidence="1">Heteromultimeric protein consisting of LacA and LacB.</text>
</comment>
<comment type="similarity">
    <text evidence="1">Belongs to the LacAB/RpiB family.</text>
</comment>
<dbReference type="EC" id="5.3.1.26" evidence="1"/>
<dbReference type="EMBL" id="BA000033">
    <property type="protein sequence ID" value="BAB95985.1"/>
    <property type="molecule type" value="Genomic_DNA"/>
</dbReference>
<dbReference type="RefSeq" id="WP_000684746.1">
    <property type="nucleotide sequence ID" value="NC_003923.1"/>
</dbReference>
<dbReference type="SMR" id="P68797"/>
<dbReference type="KEGG" id="sam:MW2120"/>
<dbReference type="HOGENOM" id="CLU_091396_2_0_9"/>
<dbReference type="UniPathway" id="UPA00702">
    <property type="reaction ID" value="UER00714"/>
</dbReference>
<dbReference type="GO" id="GO:0050044">
    <property type="term" value="F:galactose-6-phosphate isomerase activity"/>
    <property type="evidence" value="ECO:0007669"/>
    <property type="project" value="UniProtKB-UniRule"/>
</dbReference>
<dbReference type="GO" id="GO:0004751">
    <property type="term" value="F:ribose-5-phosphate isomerase activity"/>
    <property type="evidence" value="ECO:0007669"/>
    <property type="project" value="TreeGrafter"/>
</dbReference>
<dbReference type="GO" id="GO:0019316">
    <property type="term" value="P:D-allose catabolic process"/>
    <property type="evidence" value="ECO:0007669"/>
    <property type="project" value="TreeGrafter"/>
</dbReference>
<dbReference type="GO" id="GO:0019388">
    <property type="term" value="P:galactose catabolic process"/>
    <property type="evidence" value="ECO:0007669"/>
    <property type="project" value="UniProtKB-UniPathway"/>
</dbReference>
<dbReference type="GO" id="GO:0019512">
    <property type="term" value="P:lactose catabolic process via tagatose-6-phosphate"/>
    <property type="evidence" value="ECO:0007669"/>
    <property type="project" value="UniProtKB-UniRule"/>
</dbReference>
<dbReference type="GO" id="GO:0009052">
    <property type="term" value="P:pentose-phosphate shunt, non-oxidative branch"/>
    <property type="evidence" value="ECO:0007669"/>
    <property type="project" value="TreeGrafter"/>
</dbReference>
<dbReference type="Gene3D" id="3.40.1400.10">
    <property type="entry name" value="Sugar-phosphate isomerase, RpiB/LacA/LacB"/>
    <property type="match status" value="1"/>
</dbReference>
<dbReference type="HAMAP" id="MF_01556">
    <property type="entry name" value="LacB"/>
    <property type="match status" value="1"/>
</dbReference>
<dbReference type="InterPro" id="IPR004784">
    <property type="entry name" value="LacB"/>
</dbReference>
<dbReference type="InterPro" id="IPR003500">
    <property type="entry name" value="RpiB_LacA_LacB"/>
</dbReference>
<dbReference type="InterPro" id="IPR036569">
    <property type="entry name" value="RpiB_LacA_LacB_sf"/>
</dbReference>
<dbReference type="NCBIfam" id="TIGR01119">
    <property type="entry name" value="lacB"/>
    <property type="match status" value="1"/>
</dbReference>
<dbReference type="NCBIfam" id="NF004051">
    <property type="entry name" value="PRK05571.1"/>
    <property type="match status" value="1"/>
</dbReference>
<dbReference type="NCBIfam" id="NF006381">
    <property type="entry name" value="PRK08622.1"/>
    <property type="match status" value="1"/>
</dbReference>
<dbReference type="NCBIfam" id="NF009258">
    <property type="entry name" value="PRK12615.1"/>
    <property type="match status" value="1"/>
</dbReference>
<dbReference type="NCBIfam" id="TIGR00689">
    <property type="entry name" value="rpiB_lacA_lacB"/>
    <property type="match status" value="1"/>
</dbReference>
<dbReference type="PANTHER" id="PTHR30345:SF0">
    <property type="entry name" value="DNA DAMAGE-REPAIR_TOLERATION PROTEIN DRT102"/>
    <property type="match status" value="1"/>
</dbReference>
<dbReference type="PANTHER" id="PTHR30345">
    <property type="entry name" value="RIBOSE-5-PHOSPHATE ISOMERASE B"/>
    <property type="match status" value="1"/>
</dbReference>
<dbReference type="Pfam" id="PF02502">
    <property type="entry name" value="LacAB_rpiB"/>
    <property type="match status" value="1"/>
</dbReference>
<dbReference type="PIRSF" id="PIRSF005384">
    <property type="entry name" value="RpiB_LacA_B"/>
    <property type="match status" value="1"/>
</dbReference>
<dbReference type="SUPFAM" id="SSF89623">
    <property type="entry name" value="Ribose/Galactose isomerase RpiB/AlsB"/>
    <property type="match status" value="1"/>
</dbReference>
<proteinExistence type="inferred from homology"/>